<proteinExistence type="inferred from homology"/>
<keyword id="KW-0028">Amino-acid biosynthesis</keyword>
<keyword id="KW-0368">Histidine biosynthesis</keyword>
<keyword id="KW-0378">Hydrolase</keyword>
<keyword id="KW-0486">Methionine biosynthesis</keyword>
<keyword id="KW-0511">Multifunctional enzyme</keyword>
<keyword id="KW-0521">NADP</keyword>
<keyword id="KW-0554">One-carbon metabolism</keyword>
<keyword id="KW-0560">Oxidoreductase</keyword>
<keyword id="KW-0658">Purine biosynthesis</keyword>
<organism>
    <name type="scientific">Brucella melitensis biotype 2 (strain ATCC 23457)</name>
    <dbReference type="NCBI Taxonomy" id="546272"/>
    <lineage>
        <taxon>Bacteria</taxon>
        <taxon>Pseudomonadati</taxon>
        <taxon>Pseudomonadota</taxon>
        <taxon>Alphaproteobacteria</taxon>
        <taxon>Hyphomicrobiales</taxon>
        <taxon>Brucellaceae</taxon>
        <taxon>Brucella/Ochrobactrum group</taxon>
        <taxon>Brucella</taxon>
    </lineage>
</organism>
<dbReference type="EC" id="1.5.1.5" evidence="1"/>
<dbReference type="EC" id="3.5.4.9" evidence="1"/>
<dbReference type="EMBL" id="CP001489">
    <property type="protein sequence ID" value="ACO02566.1"/>
    <property type="molecule type" value="Genomic_DNA"/>
</dbReference>
<dbReference type="RefSeq" id="WP_002967255.1">
    <property type="nucleotide sequence ID" value="NC_012442.1"/>
</dbReference>
<dbReference type="SMR" id="C0RLT3"/>
<dbReference type="GeneID" id="97535127"/>
<dbReference type="KEGG" id="bmi:BMEA_B0759"/>
<dbReference type="HOGENOM" id="CLU_034045_1_2_5"/>
<dbReference type="UniPathway" id="UPA00193"/>
<dbReference type="Proteomes" id="UP000001748">
    <property type="component" value="Chromosome II"/>
</dbReference>
<dbReference type="GO" id="GO:0005829">
    <property type="term" value="C:cytosol"/>
    <property type="evidence" value="ECO:0007669"/>
    <property type="project" value="TreeGrafter"/>
</dbReference>
<dbReference type="GO" id="GO:0004477">
    <property type="term" value="F:methenyltetrahydrofolate cyclohydrolase activity"/>
    <property type="evidence" value="ECO:0007669"/>
    <property type="project" value="UniProtKB-UniRule"/>
</dbReference>
<dbReference type="GO" id="GO:0004488">
    <property type="term" value="F:methylenetetrahydrofolate dehydrogenase (NADP+) activity"/>
    <property type="evidence" value="ECO:0007669"/>
    <property type="project" value="UniProtKB-UniRule"/>
</dbReference>
<dbReference type="GO" id="GO:0000105">
    <property type="term" value="P:L-histidine biosynthetic process"/>
    <property type="evidence" value="ECO:0007669"/>
    <property type="project" value="UniProtKB-KW"/>
</dbReference>
<dbReference type="GO" id="GO:0009086">
    <property type="term" value="P:methionine biosynthetic process"/>
    <property type="evidence" value="ECO:0007669"/>
    <property type="project" value="UniProtKB-KW"/>
</dbReference>
<dbReference type="GO" id="GO:0006164">
    <property type="term" value="P:purine nucleotide biosynthetic process"/>
    <property type="evidence" value="ECO:0007669"/>
    <property type="project" value="UniProtKB-KW"/>
</dbReference>
<dbReference type="GO" id="GO:0035999">
    <property type="term" value="P:tetrahydrofolate interconversion"/>
    <property type="evidence" value="ECO:0007669"/>
    <property type="project" value="UniProtKB-UniRule"/>
</dbReference>
<dbReference type="CDD" id="cd01080">
    <property type="entry name" value="NAD_bind_m-THF_DH_Cyclohyd"/>
    <property type="match status" value="1"/>
</dbReference>
<dbReference type="FunFam" id="3.40.50.720:FF:000006">
    <property type="entry name" value="Bifunctional protein FolD"/>
    <property type="match status" value="1"/>
</dbReference>
<dbReference type="FunFam" id="3.40.50.10860:FF:000005">
    <property type="entry name" value="C-1-tetrahydrofolate synthase, cytoplasmic, putative"/>
    <property type="match status" value="1"/>
</dbReference>
<dbReference type="Gene3D" id="3.40.50.10860">
    <property type="entry name" value="Leucine Dehydrogenase, chain A, domain 1"/>
    <property type="match status" value="1"/>
</dbReference>
<dbReference type="Gene3D" id="3.40.50.720">
    <property type="entry name" value="NAD(P)-binding Rossmann-like Domain"/>
    <property type="match status" value="1"/>
</dbReference>
<dbReference type="HAMAP" id="MF_01576">
    <property type="entry name" value="THF_DHG_CYH"/>
    <property type="match status" value="1"/>
</dbReference>
<dbReference type="InterPro" id="IPR046346">
    <property type="entry name" value="Aminoacid_DH-like_N_sf"/>
</dbReference>
<dbReference type="InterPro" id="IPR036291">
    <property type="entry name" value="NAD(P)-bd_dom_sf"/>
</dbReference>
<dbReference type="InterPro" id="IPR000672">
    <property type="entry name" value="THF_DH/CycHdrlase"/>
</dbReference>
<dbReference type="InterPro" id="IPR020630">
    <property type="entry name" value="THF_DH/CycHdrlase_cat_dom"/>
</dbReference>
<dbReference type="InterPro" id="IPR020867">
    <property type="entry name" value="THF_DH/CycHdrlase_CS"/>
</dbReference>
<dbReference type="InterPro" id="IPR020631">
    <property type="entry name" value="THF_DH/CycHdrlase_NAD-bd_dom"/>
</dbReference>
<dbReference type="NCBIfam" id="NF008058">
    <property type="entry name" value="PRK10792.1"/>
    <property type="match status" value="1"/>
</dbReference>
<dbReference type="NCBIfam" id="NF010783">
    <property type="entry name" value="PRK14186.1"/>
    <property type="match status" value="1"/>
</dbReference>
<dbReference type="NCBIfam" id="NF010785">
    <property type="entry name" value="PRK14188.1"/>
    <property type="match status" value="1"/>
</dbReference>
<dbReference type="PANTHER" id="PTHR48099:SF5">
    <property type="entry name" value="C-1-TETRAHYDROFOLATE SYNTHASE, CYTOPLASMIC"/>
    <property type="match status" value="1"/>
</dbReference>
<dbReference type="PANTHER" id="PTHR48099">
    <property type="entry name" value="C-1-TETRAHYDROFOLATE SYNTHASE, CYTOPLASMIC-RELATED"/>
    <property type="match status" value="1"/>
</dbReference>
<dbReference type="Pfam" id="PF00763">
    <property type="entry name" value="THF_DHG_CYH"/>
    <property type="match status" value="1"/>
</dbReference>
<dbReference type="Pfam" id="PF02882">
    <property type="entry name" value="THF_DHG_CYH_C"/>
    <property type="match status" value="1"/>
</dbReference>
<dbReference type="PRINTS" id="PR00085">
    <property type="entry name" value="THFDHDRGNASE"/>
</dbReference>
<dbReference type="SUPFAM" id="SSF53223">
    <property type="entry name" value="Aminoacid dehydrogenase-like, N-terminal domain"/>
    <property type="match status" value="1"/>
</dbReference>
<dbReference type="SUPFAM" id="SSF51735">
    <property type="entry name" value="NAD(P)-binding Rossmann-fold domains"/>
    <property type="match status" value="1"/>
</dbReference>
<dbReference type="PROSITE" id="PS00766">
    <property type="entry name" value="THF_DHG_CYH_1"/>
    <property type="match status" value="1"/>
</dbReference>
<dbReference type="PROSITE" id="PS00767">
    <property type="entry name" value="THF_DHG_CYH_2"/>
    <property type="match status" value="1"/>
</dbReference>
<reference key="1">
    <citation type="submission" date="2009-03" db="EMBL/GenBank/DDBJ databases">
        <title>Brucella melitensis ATCC 23457 whole genome shotgun sequencing project.</title>
        <authorList>
            <person name="Setubal J.C."/>
            <person name="Boyle S."/>
            <person name="Crasta O.R."/>
            <person name="Gillespie J.J."/>
            <person name="Kenyon R.W."/>
            <person name="Lu J."/>
            <person name="Mane S."/>
            <person name="Nagrani S."/>
            <person name="Shallom J.M."/>
            <person name="Shallom S."/>
            <person name="Shukla M."/>
            <person name="Snyder E.E."/>
            <person name="Sobral B.W."/>
            <person name="Wattam A.R."/>
            <person name="Will R."/>
            <person name="Williams K."/>
            <person name="Yoo H."/>
            <person name="Munk C."/>
            <person name="Tapia R."/>
            <person name="Han C."/>
            <person name="Detter J.C."/>
            <person name="Bruce D."/>
            <person name="Brettin T.S."/>
        </authorList>
    </citation>
    <scope>NUCLEOTIDE SEQUENCE [LARGE SCALE GENOMIC DNA]</scope>
    <source>
        <strain>ATCC 23457</strain>
    </source>
</reference>
<evidence type="ECO:0000255" key="1">
    <source>
        <dbReference type="HAMAP-Rule" id="MF_01576"/>
    </source>
</evidence>
<sequence length="299" mass="31231">MAQLIDGKKLAEDVVSTVKTETEKLVAATGVVPGIAVVIVGEDPASQVYVASKSRKAKECGFHSVQHDLPETASEQELLNLIEGLNNDPAIHGILVQLPLPGHIDSGRVIQTIAPEKDVDGFHFINVGKLGTGEVETAFVPCTPAGAMIMIERVHGRDLSGLNAVVIGRSNIVGKPMFNLLLAANATVTVAHSRTKDLPAIARNADILVAAVGRPQMVKGDWVKPGATVIDVGINRIPAPERGEGKTRLVGDVDFAEAEKVAGAITPVPGGVGPMTIAMLMANTLTAACRSAGMKKPVF</sequence>
<comment type="function">
    <text evidence="1">Catalyzes the oxidation of 5,10-methylenetetrahydrofolate to 5,10-methenyltetrahydrofolate and then the hydrolysis of 5,10-methenyltetrahydrofolate to 10-formyltetrahydrofolate.</text>
</comment>
<comment type="catalytic activity">
    <reaction evidence="1">
        <text>(6R)-5,10-methylene-5,6,7,8-tetrahydrofolate + NADP(+) = (6R)-5,10-methenyltetrahydrofolate + NADPH</text>
        <dbReference type="Rhea" id="RHEA:22812"/>
        <dbReference type="ChEBI" id="CHEBI:15636"/>
        <dbReference type="ChEBI" id="CHEBI:57455"/>
        <dbReference type="ChEBI" id="CHEBI:57783"/>
        <dbReference type="ChEBI" id="CHEBI:58349"/>
        <dbReference type="EC" id="1.5.1.5"/>
    </reaction>
</comment>
<comment type="catalytic activity">
    <reaction evidence="1">
        <text>(6R)-5,10-methenyltetrahydrofolate + H2O = (6R)-10-formyltetrahydrofolate + H(+)</text>
        <dbReference type="Rhea" id="RHEA:23700"/>
        <dbReference type="ChEBI" id="CHEBI:15377"/>
        <dbReference type="ChEBI" id="CHEBI:15378"/>
        <dbReference type="ChEBI" id="CHEBI:57455"/>
        <dbReference type="ChEBI" id="CHEBI:195366"/>
        <dbReference type="EC" id="3.5.4.9"/>
    </reaction>
</comment>
<comment type="pathway">
    <text evidence="1">One-carbon metabolism; tetrahydrofolate interconversion.</text>
</comment>
<comment type="subunit">
    <text evidence="1">Homodimer.</text>
</comment>
<comment type="similarity">
    <text evidence="1">Belongs to the tetrahydrofolate dehydrogenase/cyclohydrolase family.</text>
</comment>
<gene>
    <name evidence="1" type="primary">folD</name>
    <name type="ordered locus">BMEA_B0759</name>
</gene>
<accession>C0RLT3</accession>
<feature type="chain" id="PRO_1000185600" description="Bifunctional protein FolD">
    <location>
        <begin position="1"/>
        <end position="299"/>
    </location>
</feature>
<feature type="binding site" evidence="1">
    <location>
        <begin position="168"/>
        <end position="170"/>
    </location>
    <ligand>
        <name>NADP(+)</name>
        <dbReference type="ChEBI" id="CHEBI:58349"/>
    </ligand>
</feature>
<feature type="binding site" evidence="1">
    <location>
        <position position="193"/>
    </location>
    <ligand>
        <name>NADP(+)</name>
        <dbReference type="ChEBI" id="CHEBI:58349"/>
    </ligand>
</feature>
<feature type="binding site" evidence="1">
    <location>
        <position position="234"/>
    </location>
    <ligand>
        <name>NADP(+)</name>
        <dbReference type="ChEBI" id="CHEBI:58349"/>
    </ligand>
</feature>
<name>FOLD_BRUMB</name>
<protein>
    <recommendedName>
        <fullName evidence="1">Bifunctional protein FolD</fullName>
    </recommendedName>
    <domain>
        <recommendedName>
            <fullName evidence="1">Methylenetetrahydrofolate dehydrogenase</fullName>
            <ecNumber evidence="1">1.5.1.5</ecNumber>
        </recommendedName>
    </domain>
    <domain>
        <recommendedName>
            <fullName evidence="1">Methenyltetrahydrofolate cyclohydrolase</fullName>
            <ecNumber evidence="1">3.5.4.9</ecNumber>
        </recommendedName>
    </domain>
</protein>